<proteinExistence type="evidence at transcript level"/>
<evidence type="ECO:0000250" key="1"/>
<evidence type="ECO:0000255" key="2"/>
<evidence type="ECO:0000256" key="3">
    <source>
        <dbReference type="SAM" id="MobiDB-lite"/>
    </source>
</evidence>
<evidence type="ECO:0000269" key="4">
    <source>
    </source>
</evidence>
<evidence type="ECO:0000305" key="5"/>
<sequence length="483" mass="54956">MTVVSCEIQDETVVVSPLYQDDCDEERGDQECSERVVINISGLRFETQLRTLSRFPTTLLGDPRKRMRFFDPLRNEYFFDRNRPSFDAILYYYQSGGKLRRPVNVTMDIFMEEMTFYEIEEEAIDMFKEDEGMIIEVERAMPDNEFQRQLWLLFEYPESSGPARMIAVVSVSVIVISIVIFCLETLPQFREDTSANLPLSNHHTTNGTTLHKKPNLFTDPFFMVETLCIVWFSFEFLVRFLSCPSKPAFFKNAMNSIDILAIAPYFITLGLELAEQQEAGSEQAMSLAILRVIRLVRVFRIFKLSRHSKGLQILGQTLHASISELGLLIFFLLIGVILFSSAVYFAEADDPESGFSSIPAAFWWAVVSMTTVGYGDMCPVTIGGKIVGSMCAIAGVLTIALPVPVIVSNFNYFYHRERNDEETAVYTHVTCGQQNASFGEFKSTSDSRQSLTKSEDTEEDSCETIRLTHFNPFEHYTGKLTDV</sequence>
<organism>
    <name type="scientific">Oncorhynchus mykiss</name>
    <name type="common">Rainbow trout</name>
    <name type="synonym">Salmo gairdneri</name>
    <dbReference type="NCBI Taxonomy" id="8022"/>
    <lineage>
        <taxon>Eukaryota</taxon>
        <taxon>Metazoa</taxon>
        <taxon>Chordata</taxon>
        <taxon>Craniata</taxon>
        <taxon>Vertebrata</taxon>
        <taxon>Euteleostomi</taxon>
        <taxon>Actinopterygii</taxon>
        <taxon>Neopterygii</taxon>
        <taxon>Teleostei</taxon>
        <taxon>Protacanthopterygii</taxon>
        <taxon>Salmoniformes</taxon>
        <taxon>Salmonidae</taxon>
        <taxon>Salmoninae</taxon>
        <taxon>Oncorhynchus</taxon>
    </lineage>
</organism>
<dbReference type="EMBL" id="AF252302">
    <property type="protein sequence ID" value="AAF70088.1"/>
    <property type="molecule type" value="Genomic_DNA"/>
</dbReference>
<dbReference type="SMR" id="Q9I829"/>
<dbReference type="Proteomes" id="UP000694395">
    <property type="component" value="Unplaced"/>
</dbReference>
<dbReference type="GO" id="GO:0030424">
    <property type="term" value="C:axon"/>
    <property type="evidence" value="ECO:0000250"/>
    <property type="project" value="UniProtKB"/>
</dbReference>
<dbReference type="GO" id="GO:0044224">
    <property type="term" value="C:juxtaparanode region of axon"/>
    <property type="evidence" value="ECO:0000250"/>
    <property type="project" value="UniProtKB"/>
</dbReference>
<dbReference type="GO" id="GO:0033270">
    <property type="term" value="C:paranode region of axon"/>
    <property type="evidence" value="ECO:0000250"/>
    <property type="project" value="UniProtKB"/>
</dbReference>
<dbReference type="GO" id="GO:0043204">
    <property type="term" value="C:perikaryon"/>
    <property type="evidence" value="ECO:0000250"/>
    <property type="project" value="UniProtKB"/>
</dbReference>
<dbReference type="GO" id="GO:0008076">
    <property type="term" value="C:voltage-gated potassium channel complex"/>
    <property type="evidence" value="ECO:0007669"/>
    <property type="project" value="InterPro"/>
</dbReference>
<dbReference type="GO" id="GO:0005251">
    <property type="term" value="F:delayed rectifier potassium channel activity"/>
    <property type="evidence" value="ECO:0000250"/>
    <property type="project" value="UniProtKB"/>
</dbReference>
<dbReference type="GO" id="GO:0005249">
    <property type="term" value="F:voltage-gated potassium channel activity"/>
    <property type="evidence" value="ECO:0000250"/>
    <property type="project" value="UniProtKB"/>
</dbReference>
<dbReference type="GO" id="GO:0001508">
    <property type="term" value="P:action potential"/>
    <property type="evidence" value="ECO:0007669"/>
    <property type="project" value="TreeGrafter"/>
</dbReference>
<dbReference type="GO" id="GO:0010960">
    <property type="term" value="P:magnesium ion homeostasis"/>
    <property type="evidence" value="ECO:0000250"/>
    <property type="project" value="UniProtKB"/>
</dbReference>
<dbReference type="GO" id="GO:0071805">
    <property type="term" value="P:potassium ion transmembrane transport"/>
    <property type="evidence" value="ECO:0000250"/>
    <property type="project" value="UniProtKB"/>
</dbReference>
<dbReference type="GO" id="GO:0051260">
    <property type="term" value="P:protein homooligomerization"/>
    <property type="evidence" value="ECO:0007669"/>
    <property type="project" value="InterPro"/>
</dbReference>
<dbReference type="GO" id="GO:0042391">
    <property type="term" value="P:regulation of membrane potential"/>
    <property type="evidence" value="ECO:0000250"/>
    <property type="project" value="UniProtKB"/>
</dbReference>
<dbReference type="FunFam" id="1.10.287.70:FF:000002">
    <property type="entry name" value="Potassium voltage-gated channel subfamily a member"/>
    <property type="match status" value="1"/>
</dbReference>
<dbReference type="FunFam" id="1.20.120.350:FF:000033">
    <property type="entry name" value="potassium voltage-gated channel subfamily A member 10"/>
    <property type="match status" value="1"/>
</dbReference>
<dbReference type="FunFam" id="3.30.710.10:FF:000146">
    <property type="entry name" value="Potassium voltage-gated channel subfamily A member 3"/>
    <property type="match status" value="1"/>
</dbReference>
<dbReference type="Gene3D" id="1.10.287.70">
    <property type="match status" value="1"/>
</dbReference>
<dbReference type="Gene3D" id="3.30.710.10">
    <property type="entry name" value="Potassium Channel Kv1.1, Chain A"/>
    <property type="match status" value="1"/>
</dbReference>
<dbReference type="Gene3D" id="1.20.120.350">
    <property type="entry name" value="Voltage-gated potassium channels. Chain C"/>
    <property type="match status" value="1"/>
</dbReference>
<dbReference type="InterPro" id="IPR000210">
    <property type="entry name" value="BTB/POZ_dom"/>
</dbReference>
<dbReference type="InterPro" id="IPR005821">
    <property type="entry name" value="Ion_trans_dom"/>
</dbReference>
<dbReference type="InterPro" id="IPR003968">
    <property type="entry name" value="K_chnl_volt-dep_Kv"/>
</dbReference>
<dbReference type="InterPro" id="IPR003972">
    <property type="entry name" value="K_chnl_volt-dep_Kv1"/>
</dbReference>
<dbReference type="InterPro" id="IPR011333">
    <property type="entry name" value="SKP1/BTB/POZ_sf"/>
</dbReference>
<dbReference type="InterPro" id="IPR003131">
    <property type="entry name" value="T1-type_BTB"/>
</dbReference>
<dbReference type="InterPro" id="IPR028325">
    <property type="entry name" value="VG_K_chnl"/>
</dbReference>
<dbReference type="InterPro" id="IPR027359">
    <property type="entry name" value="Volt_channel_dom_sf"/>
</dbReference>
<dbReference type="PANTHER" id="PTHR11537:SF281">
    <property type="entry name" value="BTB DOMAIN-CONTAINING PROTEIN"/>
    <property type="match status" value="1"/>
</dbReference>
<dbReference type="PANTHER" id="PTHR11537">
    <property type="entry name" value="VOLTAGE-GATED POTASSIUM CHANNEL"/>
    <property type="match status" value="1"/>
</dbReference>
<dbReference type="Pfam" id="PF02214">
    <property type="entry name" value="BTB_2"/>
    <property type="match status" value="1"/>
</dbReference>
<dbReference type="Pfam" id="PF00520">
    <property type="entry name" value="Ion_trans"/>
    <property type="match status" value="1"/>
</dbReference>
<dbReference type="PRINTS" id="PR00169">
    <property type="entry name" value="KCHANNEL"/>
</dbReference>
<dbReference type="PRINTS" id="PR01491">
    <property type="entry name" value="KVCHANNEL"/>
</dbReference>
<dbReference type="PRINTS" id="PR01496">
    <property type="entry name" value="SHAKERCHANEL"/>
</dbReference>
<dbReference type="SMART" id="SM00225">
    <property type="entry name" value="BTB"/>
    <property type="match status" value="1"/>
</dbReference>
<dbReference type="SUPFAM" id="SSF54695">
    <property type="entry name" value="POZ domain"/>
    <property type="match status" value="1"/>
</dbReference>
<dbReference type="SUPFAM" id="SSF81324">
    <property type="entry name" value="Voltage-gated potassium channels"/>
    <property type="match status" value="1"/>
</dbReference>
<accession>Q9I829</accession>
<protein>
    <recommendedName>
        <fullName>Shaker-related potassium channel tsha2</fullName>
    </recommendedName>
    <alternativeName>
        <fullName>Trout shaker 2</fullName>
    </alternativeName>
</protein>
<comment type="function">
    <text evidence="1">Mediates the voltage-dependent potassium ion permeability of excitable membranes. Assuming opened or closed conformations in response to the voltage difference across the membrane, the protein forms a potassium-selective channel through which potassium ions may pass in accordance with their electrochemical gradient (By similarity).</text>
</comment>
<comment type="subunit">
    <text evidence="1">Heterotetramer of potassium channel proteins. Binds PDZ domains of dlg1, dlg2 and dlg4 (By similarity).</text>
</comment>
<comment type="subcellular location">
    <subcellularLocation>
        <location evidence="1">Membrane</location>
        <topology evidence="1">Multi-pass membrane protein</topology>
    </subcellularLocation>
</comment>
<comment type="tissue specificity">
    <text evidence="4">Expressed in oligodendrocytes and astrocytes.</text>
</comment>
<comment type="domain">
    <text evidence="1">The N-terminus may be important in determining the rate of inactivation of the channel while the tail may play a role in modulation of channel activity and/or targeting of the channel to specific subcellular compartments.</text>
</comment>
<comment type="domain">
    <text evidence="1">The segment S4 is probably the voltage-sensor and is characterized by a series of positively charged amino acids at every third position.</text>
</comment>
<comment type="similarity">
    <text evidence="5">Belongs to the potassium channel family. A (Shaker) (TC 1.A.1.2) subfamily.</text>
</comment>
<reference key="1">
    <citation type="journal article" date="1998" name="J. Neurosci. Res.">
        <title>Molecular structure and expression of shaker type potassium channels in glial cells of trout CNS.</title>
        <authorList>
            <person name="Nguyen T.-D."/>
            <person name="Jeserich G."/>
        </authorList>
    </citation>
    <scope>NUCLEOTIDE SEQUENCE [GENOMIC DNA]</scope>
    <scope>TISSUE SPECIFICITY</scope>
    <source>
        <tissue>Brain</tissue>
    </source>
</reference>
<keyword id="KW-0407">Ion channel</keyword>
<keyword id="KW-0406">Ion transport</keyword>
<keyword id="KW-0449">Lipoprotein</keyword>
<keyword id="KW-0472">Membrane</keyword>
<keyword id="KW-0564">Palmitate</keyword>
<keyword id="KW-0597">Phosphoprotein</keyword>
<keyword id="KW-0630">Potassium</keyword>
<keyword id="KW-0631">Potassium channel</keyword>
<keyword id="KW-0633">Potassium transport</keyword>
<keyword id="KW-0812">Transmembrane</keyword>
<keyword id="KW-1133">Transmembrane helix</keyword>
<keyword id="KW-0813">Transport</keyword>
<keyword id="KW-0851">Voltage-gated channel</keyword>
<name>KCNA1_ONCMY</name>
<feature type="chain" id="PRO_0000395617" description="Shaker-related potassium channel tsha2">
    <location>
        <begin position="1"/>
        <end position="483"/>
    </location>
</feature>
<feature type="topological domain" description="Cytoplasmic" evidence="2">
    <location>
        <begin position="1"/>
        <end position="165"/>
    </location>
</feature>
<feature type="transmembrane region" description="Helical; Name=Segment S1" evidence="2">
    <location>
        <begin position="166"/>
        <end position="186"/>
    </location>
</feature>
<feature type="topological domain" description="Extracellular" evidence="2">
    <location>
        <begin position="187"/>
        <end position="220"/>
    </location>
</feature>
<feature type="transmembrane region" description="Helical; Name=Segment S2" evidence="2">
    <location>
        <begin position="221"/>
        <end position="241"/>
    </location>
</feature>
<feature type="topological domain" description="Cytoplasmic" evidence="2">
    <location>
        <begin position="242"/>
        <end position="252"/>
    </location>
</feature>
<feature type="transmembrane region" description="Helical; Name=Segment S3" evidence="2">
    <location>
        <begin position="253"/>
        <end position="273"/>
    </location>
</feature>
<feature type="topological domain" description="Extracellular" evidence="2">
    <location>
        <begin position="274"/>
        <end position="324"/>
    </location>
</feature>
<feature type="transmembrane region" description="Helical; Voltage-sensor; Name=Segment S4" evidence="2">
    <location>
        <begin position="325"/>
        <end position="345"/>
    </location>
</feature>
<feature type="topological domain" description="Cytoplasmic" evidence="2">
    <location>
        <begin position="346"/>
        <end position="353"/>
    </location>
</feature>
<feature type="transmembrane region" description="Helical; Name=Segment S5" evidence="2">
    <location>
        <begin position="354"/>
        <end position="374"/>
    </location>
</feature>
<feature type="topological domain" description="Extracellular" evidence="2">
    <location>
        <begin position="375"/>
        <end position="385"/>
    </location>
</feature>
<feature type="transmembrane region" description="Helical; Name=Segment S6" evidence="2">
    <location>
        <begin position="386"/>
        <end position="406"/>
    </location>
</feature>
<feature type="topological domain" description="Cytoplasmic" evidence="2">
    <location>
        <begin position="407"/>
        <end position="483"/>
    </location>
</feature>
<feature type="region of interest" description="Disordered" evidence="3">
    <location>
        <begin position="440"/>
        <end position="459"/>
    </location>
</feature>
<feature type="short sequence motif" description="Selectivity filter" evidence="1">
    <location>
        <begin position="371"/>
        <end position="376"/>
    </location>
</feature>
<feature type="short sequence motif" description="PDZ-binding" evidence="1">
    <location>
        <begin position="481"/>
        <end position="483"/>
    </location>
</feature>
<feature type="compositionally biased region" description="Polar residues" evidence="3">
    <location>
        <begin position="440"/>
        <end position="452"/>
    </location>
</feature>
<feature type="modified residue" description="Phosphotyrosine" evidence="1">
    <location>
        <position position="426"/>
    </location>
</feature>
<feature type="modified residue" description="Phosphothreonine" evidence="1">
    <location>
        <position position="430"/>
    </location>
</feature>
<feature type="lipid moiety-binding region" description="S-palmitoyl cysteine" evidence="2">
    <location>
        <position position="243"/>
    </location>
</feature>